<name>COAX_DESHD</name>
<organism>
    <name type="scientific">Desulfitobacterium hafniense (strain DSM 10664 / DCB-2)</name>
    <dbReference type="NCBI Taxonomy" id="272564"/>
    <lineage>
        <taxon>Bacteria</taxon>
        <taxon>Bacillati</taxon>
        <taxon>Bacillota</taxon>
        <taxon>Clostridia</taxon>
        <taxon>Eubacteriales</taxon>
        <taxon>Desulfitobacteriaceae</taxon>
        <taxon>Desulfitobacterium</taxon>
    </lineage>
</organism>
<feature type="chain" id="PRO_1000165195" description="Type III pantothenate kinase">
    <location>
        <begin position="1"/>
        <end position="258"/>
    </location>
</feature>
<feature type="active site" description="Proton acceptor" evidence="1">
    <location>
        <position position="109"/>
    </location>
</feature>
<feature type="binding site" evidence="1">
    <location>
        <begin position="6"/>
        <end position="13"/>
    </location>
    <ligand>
        <name>ATP</name>
        <dbReference type="ChEBI" id="CHEBI:30616"/>
    </ligand>
</feature>
<feature type="binding site" evidence="1">
    <location>
        <position position="100"/>
    </location>
    <ligand>
        <name>substrate</name>
    </ligand>
</feature>
<feature type="binding site" evidence="1">
    <location>
        <begin position="107"/>
        <end position="110"/>
    </location>
    <ligand>
        <name>substrate</name>
    </ligand>
</feature>
<feature type="binding site" evidence="1">
    <location>
        <position position="129"/>
    </location>
    <ligand>
        <name>K(+)</name>
        <dbReference type="ChEBI" id="CHEBI:29103"/>
    </ligand>
</feature>
<feature type="binding site" evidence="1">
    <location>
        <position position="132"/>
    </location>
    <ligand>
        <name>ATP</name>
        <dbReference type="ChEBI" id="CHEBI:30616"/>
    </ligand>
</feature>
<feature type="binding site" evidence="1">
    <location>
        <position position="184"/>
    </location>
    <ligand>
        <name>substrate</name>
    </ligand>
</feature>
<evidence type="ECO:0000255" key="1">
    <source>
        <dbReference type="HAMAP-Rule" id="MF_01274"/>
    </source>
</evidence>
<reference key="1">
    <citation type="journal article" date="2012" name="BMC Microbiol.">
        <title>Genome sequence of Desulfitobacterium hafniense DCB-2, a Gram-positive anaerobe capable of dehalogenation and metal reduction.</title>
        <authorList>
            <person name="Kim S.H."/>
            <person name="Harzman C."/>
            <person name="Davis J.K."/>
            <person name="Hutcheson R."/>
            <person name="Broderick J.B."/>
            <person name="Marsh T.L."/>
            <person name="Tiedje J.M."/>
        </authorList>
    </citation>
    <scope>NUCLEOTIDE SEQUENCE [LARGE SCALE GENOMIC DNA]</scope>
    <source>
        <strain>DSM 10664 / DCB-2</strain>
    </source>
</reference>
<accession>B8FZE5</accession>
<protein>
    <recommendedName>
        <fullName evidence="1">Type III pantothenate kinase</fullName>
        <ecNumber evidence="1">2.7.1.33</ecNumber>
    </recommendedName>
    <alternativeName>
        <fullName evidence="1">PanK-III</fullName>
    </alternativeName>
    <alternativeName>
        <fullName evidence="1">Pantothenic acid kinase</fullName>
    </alternativeName>
</protein>
<gene>
    <name evidence="1" type="primary">coaX</name>
    <name type="ordered locus">Dhaf_0160</name>
</gene>
<sequence>MILVFDVGNTNIVLGVYEQKDLIYHWRISTDKSRTVDEYAVIIKNLFDLNGLDMSRIKAVVMSSVVPPVMPTLESLARKYFDVEPLVIGPGVKTGMPIVYDNPREVGADRIVNAVAAYHKYGGPLVIVDFGTATTFCAISKRGEYLGGAIAPGVGISTEALFQRASKLPRIEIVKPKSIIAKNTVAGMQSGIYYGYTGQVDRIVTLMKQELGRDTRVIATGGLAELIQEDSQEIETVDPFLTLEGLLLIYERNSNQQP</sequence>
<keyword id="KW-0067">ATP-binding</keyword>
<keyword id="KW-0173">Coenzyme A biosynthesis</keyword>
<keyword id="KW-0963">Cytoplasm</keyword>
<keyword id="KW-0418">Kinase</keyword>
<keyword id="KW-0479">Metal-binding</keyword>
<keyword id="KW-0547">Nucleotide-binding</keyword>
<keyword id="KW-0630">Potassium</keyword>
<keyword id="KW-0808">Transferase</keyword>
<proteinExistence type="inferred from homology"/>
<dbReference type="EC" id="2.7.1.33" evidence="1"/>
<dbReference type="EMBL" id="CP001336">
    <property type="protein sequence ID" value="ACL18228.1"/>
    <property type="molecule type" value="Genomic_DNA"/>
</dbReference>
<dbReference type="RefSeq" id="WP_005809761.1">
    <property type="nucleotide sequence ID" value="NC_011830.1"/>
</dbReference>
<dbReference type="SMR" id="B8FZE5"/>
<dbReference type="KEGG" id="dhd:Dhaf_0160"/>
<dbReference type="HOGENOM" id="CLU_066627_1_0_9"/>
<dbReference type="UniPathway" id="UPA00241">
    <property type="reaction ID" value="UER00352"/>
</dbReference>
<dbReference type="Proteomes" id="UP000007726">
    <property type="component" value="Chromosome"/>
</dbReference>
<dbReference type="GO" id="GO:0005737">
    <property type="term" value="C:cytoplasm"/>
    <property type="evidence" value="ECO:0007669"/>
    <property type="project" value="UniProtKB-SubCell"/>
</dbReference>
<dbReference type="GO" id="GO:0005524">
    <property type="term" value="F:ATP binding"/>
    <property type="evidence" value="ECO:0007669"/>
    <property type="project" value="UniProtKB-UniRule"/>
</dbReference>
<dbReference type="GO" id="GO:0046872">
    <property type="term" value="F:metal ion binding"/>
    <property type="evidence" value="ECO:0007669"/>
    <property type="project" value="UniProtKB-KW"/>
</dbReference>
<dbReference type="GO" id="GO:0004594">
    <property type="term" value="F:pantothenate kinase activity"/>
    <property type="evidence" value="ECO:0007669"/>
    <property type="project" value="UniProtKB-UniRule"/>
</dbReference>
<dbReference type="GO" id="GO:0015937">
    <property type="term" value="P:coenzyme A biosynthetic process"/>
    <property type="evidence" value="ECO:0007669"/>
    <property type="project" value="UniProtKB-UniRule"/>
</dbReference>
<dbReference type="CDD" id="cd24015">
    <property type="entry name" value="ASKHA_NBD_PanK-III"/>
    <property type="match status" value="1"/>
</dbReference>
<dbReference type="Gene3D" id="3.30.420.40">
    <property type="match status" value="2"/>
</dbReference>
<dbReference type="HAMAP" id="MF_01274">
    <property type="entry name" value="Pantothen_kinase_3"/>
    <property type="match status" value="1"/>
</dbReference>
<dbReference type="InterPro" id="IPR043129">
    <property type="entry name" value="ATPase_NBD"/>
</dbReference>
<dbReference type="InterPro" id="IPR004619">
    <property type="entry name" value="Type_III_PanK"/>
</dbReference>
<dbReference type="NCBIfam" id="TIGR00671">
    <property type="entry name" value="baf"/>
    <property type="match status" value="1"/>
</dbReference>
<dbReference type="NCBIfam" id="NF009847">
    <property type="entry name" value="PRK13318.1-5"/>
    <property type="match status" value="1"/>
</dbReference>
<dbReference type="NCBIfam" id="NF009848">
    <property type="entry name" value="PRK13318.1-6"/>
    <property type="match status" value="1"/>
</dbReference>
<dbReference type="NCBIfam" id="NF009855">
    <property type="entry name" value="PRK13321.1"/>
    <property type="match status" value="1"/>
</dbReference>
<dbReference type="PANTHER" id="PTHR34265">
    <property type="entry name" value="TYPE III PANTOTHENATE KINASE"/>
    <property type="match status" value="1"/>
</dbReference>
<dbReference type="PANTHER" id="PTHR34265:SF1">
    <property type="entry name" value="TYPE III PANTOTHENATE KINASE"/>
    <property type="match status" value="1"/>
</dbReference>
<dbReference type="Pfam" id="PF03309">
    <property type="entry name" value="Pan_kinase"/>
    <property type="match status" value="1"/>
</dbReference>
<dbReference type="SUPFAM" id="SSF53067">
    <property type="entry name" value="Actin-like ATPase domain"/>
    <property type="match status" value="2"/>
</dbReference>
<comment type="function">
    <text evidence="1">Catalyzes the phosphorylation of pantothenate (Pan), the first step in CoA biosynthesis.</text>
</comment>
<comment type="catalytic activity">
    <reaction evidence="1">
        <text>(R)-pantothenate + ATP = (R)-4'-phosphopantothenate + ADP + H(+)</text>
        <dbReference type="Rhea" id="RHEA:16373"/>
        <dbReference type="ChEBI" id="CHEBI:10986"/>
        <dbReference type="ChEBI" id="CHEBI:15378"/>
        <dbReference type="ChEBI" id="CHEBI:29032"/>
        <dbReference type="ChEBI" id="CHEBI:30616"/>
        <dbReference type="ChEBI" id="CHEBI:456216"/>
        <dbReference type="EC" id="2.7.1.33"/>
    </reaction>
</comment>
<comment type="cofactor">
    <cofactor evidence="1">
        <name>NH4(+)</name>
        <dbReference type="ChEBI" id="CHEBI:28938"/>
    </cofactor>
    <cofactor evidence="1">
        <name>K(+)</name>
        <dbReference type="ChEBI" id="CHEBI:29103"/>
    </cofactor>
    <text evidence="1">A monovalent cation. Ammonium or potassium.</text>
</comment>
<comment type="pathway">
    <text evidence="1">Cofactor biosynthesis; coenzyme A biosynthesis; CoA from (R)-pantothenate: step 1/5.</text>
</comment>
<comment type="subunit">
    <text evidence="1">Homodimer.</text>
</comment>
<comment type="subcellular location">
    <subcellularLocation>
        <location evidence="1">Cytoplasm</location>
    </subcellularLocation>
</comment>
<comment type="similarity">
    <text evidence="1">Belongs to the type III pantothenate kinase family.</text>
</comment>